<dbReference type="EMBL" id="CP001349">
    <property type="protein sequence ID" value="ACL55291.1"/>
    <property type="molecule type" value="Genomic_DNA"/>
</dbReference>
<dbReference type="RefSeq" id="WP_015927004.1">
    <property type="nucleotide sequence ID" value="NC_011894.1"/>
</dbReference>
<dbReference type="SMR" id="B8I9N8"/>
<dbReference type="STRING" id="460265.Mnod_0247"/>
<dbReference type="KEGG" id="mno:Mnod_0247"/>
<dbReference type="eggNOG" id="COG4973">
    <property type="taxonomic scope" value="Bacteria"/>
</dbReference>
<dbReference type="HOGENOM" id="CLU_027562_9_0_5"/>
<dbReference type="OrthoDB" id="9801717at2"/>
<dbReference type="Proteomes" id="UP000008207">
    <property type="component" value="Chromosome"/>
</dbReference>
<dbReference type="GO" id="GO:0005737">
    <property type="term" value="C:cytoplasm"/>
    <property type="evidence" value="ECO:0007669"/>
    <property type="project" value="UniProtKB-SubCell"/>
</dbReference>
<dbReference type="GO" id="GO:0003677">
    <property type="term" value="F:DNA binding"/>
    <property type="evidence" value="ECO:0007669"/>
    <property type="project" value="UniProtKB-KW"/>
</dbReference>
<dbReference type="GO" id="GO:0009037">
    <property type="term" value="F:tyrosine-based site-specific recombinase activity"/>
    <property type="evidence" value="ECO:0007669"/>
    <property type="project" value="UniProtKB-UniRule"/>
</dbReference>
<dbReference type="GO" id="GO:0051301">
    <property type="term" value="P:cell division"/>
    <property type="evidence" value="ECO:0007669"/>
    <property type="project" value="UniProtKB-KW"/>
</dbReference>
<dbReference type="GO" id="GO:0007059">
    <property type="term" value="P:chromosome segregation"/>
    <property type="evidence" value="ECO:0007669"/>
    <property type="project" value="UniProtKB-UniRule"/>
</dbReference>
<dbReference type="GO" id="GO:0006313">
    <property type="term" value="P:DNA transposition"/>
    <property type="evidence" value="ECO:0007669"/>
    <property type="project" value="UniProtKB-UniRule"/>
</dbReference>
<dbReference type="Gene3D" id="1.10.150.130">
    <property type="match status" value="1"/>
</dbReference>
<dbReference type="Gene3D" id="1.10.443.10">
    <property type="entry name" value="Intergrase catalytic core"/>
    <property type="match status" value="1"/>
</dbReference>
<dbReference type="HAMAP" id="MF_01808">
    <property type="entry name" value="Recomb_XerC_XerD"/>
    <property type="match status" value="1"/>
</dbReference>
<dbReference type="InterPro" id="IPR044068">
    <property type="entry name" value="CB"/>
</dbReference>
<dbReference type="InterPro" id="IPR011010">
    <property type="entry name" value="DNA_brk_join_enz"/>
</dbReference>
<dbReference type="InterPro" id="IPR013762">
    <property type="entry name" value="Integrase-like_cat_sf"/>
</dbReference>
<dbReference type="InterPro" id="IPR002104">
    <property type="entry name" value="Integrase_catalytic"/>
</dbReference>
<dbReference type="InterPro" id="IPR010998">
    <property type="entry name" value="Integrase_recombinase_N"/>
</dbReference>
<dbReference type="InterPro" id="IPR004107">
    <property type="entry name" value="Integrase_SAM-like_N"/>
</dbReference>
<dbReference type="InterPro" id="IPR023009">
    <property type="entry name" value="Tyrosine_recombinase_XerC/XerD"/>
</dbReference>
<dbReference type="InterPro" id="IPR050090">
    <property type="entry name" value="Tyrosine_recombinase_XerCD"/>
</dbReference>
<dbReference type="PANTHER" id="PTHR30349">
    <property type="entry name" value="PHAGE INTEGRASE-RELATED"/>
    <property type="match status" value="1"/>
</dbReference>
<dbReference type="PANTHER" id="PTHR30349:SF90">
    <property type="entry name" value="TYROSINE RECOMBINASE XERD"/>
    <property type="match status" value="1"/>
</dbReference>
<dbReference type="Pfam" id="PF02899">
    <property type="entry name" value="Phage_int_SAM_1"/>
    <property type="match status" value="1"/>
</dbReference>
<dbReference type="Pfam" id="PF00589">
    <property type="entry name" value="Phage_integrase"/>
    <property type="match status" value="1"/>
</dbReference>
<dbReference type="SUPFAM" id="SSF56349">
    <property type="entry name" value="DNA breaking-rejoining enzymes"/>
    <property type="match status" value="1"/>
</dbReference>
<dbReference type="SUPFAM" id="SSF47823">
    <property type="entry name" value="lambda integrase-like, N-terminal domain"/>
    <property type="match status" value="1"/>
</dbReference>
<dbReference type="PROSITE" id="PS51900">
    <property type="entry name" value="CB"/>
    <property type="match status" value="1"/>
</dbReference>
<dbReference type="PROSITE" id="PS51898">
    <property type="entry name" value="TYR_RECOMBINASE"/>
    <property type="match status" value="1"/>
</dbReference>
<sequence length="322" mass="34122">MLQTTPPDLLLGAPDLREAAAAWLAVLKTERRFSENTVEAYGRDLRQFLAHLARSGAAPDIPALVALKPRDLRAFMAARRAEGVSGRSLMRALAALRSFARHLDREGHGTVSALSAVRSPKVERRLPRPLPVAAAVAMASPDIRAGEDRPDWVLARDAAVLALLYGAGLRIGEALGIRRKDAPVGDIDTLTILGKGQKTRMVPVIAPVQAAVADYLAVCPHPLPPDGPLFVGQKGGPLSPRIVQLAVASLRGALGLPDSATPHALRHSFATHLLARQGDLRAIQDLLGHASLATTQVYTKVDSARLLSAFDAAHPRAGRPGG</sequence>
<comment type="function">
    <text evidence="1">Site-specific tyrosine recombinase, which acts by catalyzing the cutting and rejoining of the recombining DNA molecules. The XerC-XerD complex is essential to convert dimers of the bacterial chromosome into monomers to permit their segregation at cell division. It also contributes to the segregational stability of plasmids.</text>
</comment>
<comment type="subunit">
    <text evidence="1">Forms a cyclic heterotetrameric complex composed of two molecules of XerC and two molecules of XerD.</text>
</comment>
<comment type="subcellular location">
    <subcellularLocation>
        <location evidence="1">Cytoplasm</location>
    </subcellularLocation>
</comment>
<comment type="similarity">
    <text evidence="1">Belongs to the 'phage' integrase family. XerC subfamily.</text>
</comment>
<evidence type="ECO:0000255" key="1">
    <source>
        <dbReference type="HAMAP-Rule" id="MF_01808"/>
    </source>
</evidence>
<evidence type="ECO:0000255" key="2">
    <source>
        <dbReference type="PROSITE-ProRule" id="PRU01246"/>
    </source>
</evidence>
<evidence type="ECO:0000255" key="3">
    <source>
        <dbReference type="PROSITE-ProRule" id="PRU01248"/>
    </source>
</evidence>
<organism>
    <name type="scientific">Methylobacterium nodulans (strain LMG 21967 / CNCM I-2342 / ORS 2060)</name>
    <dbReference type="NCBI Taxonomy" id="460265"/>
    <lineage>
        <taxon>Bacteria</taxon>
        <taxon>Pseudomonadati</taxon>
        <taxon>Pseudomonadota</taxon>
        <taxon>Alphaproteobacteria</taxon>
        <taxon>Hyphomicrobiales</taxon>
        <taxon>Methylobacteriaceae</taxon>
        <taxon>Methylobacterium</taxon>
    </lineage>
</organism>
<protein>
    <recommendedName>
        <fullName evidence="1">Tyrosine recombinase XerC</fullName>
    </recommendedName>
</protein>
<name>XERC_METNO</name>
<feature type="chain" id="PRO_1000215954" description="Tyrosine recombinase XerC">
    <location>
        <begin position="1"/>
        <end position="322"/>
    </location>
</feature>
<feature type="domain" description="Core-binding (CB)" evidence="3">
    <location>
        <begin position="14"/>
        <end position="104"/>
    </location>
</feature>
<feature type="domain" description="Tyr recombinase" evidence="2">
    <location>
        <begin position="125"/>
        <end position="311"/>
    </location>
</feature>
<feature type="active site" evidence="1">
    <location>
        <position position="170"/>
    </location>
</feature>
<feature type="active site" evidence="1">
    <location>
        <position position="195"/>
    </location>
</feature>
<feature type="active site" evidence="1">
    <location>
        <position position="263"/>
    </location>
</feature>
<feature type="active site" evidence="1">
    <location>
        <position position="266"/>
    </location>
</feature>
<feature type="active site" evidence="1">
    <location>
        <position position="289"/>
    </location>
</feature>
<feature type="active site" description="O-(3'-phospho-DNA)-tyrosine intermediate" evidence="1">
    <location>
        <position position="298"/>
    </location>
</feature>
<keyword id="KW-0131">Cell cycle</keyword>
<keyword id="KW-0132">Cell division</keyword>
<keyword id="KW-0159">Chromosome partition</keyword>
<keyword id="KW-0963">Cytoplasm</keyword>
<keyword id="KW-0229">DNA integration</keyword>
<keyword id="KW-0233">DNA recombination</keyword>
<keyword id="KW-0238">DNA-binding</keyword>
<keyword id="KW-1185">Reference proteome</keyword>
<gene>
    <name evidence="1" type="primary">xerC</name>
    <name type="ordered locus">Mnod_0247</name>
</gene>
<reference key="1">
    <citation type="submission" date="2009-01" db="EMBL/GenBank/DDBJ databases">
        <title>Complete sequence of chromosome of Methylobacterium nodulans ORS 2060.</title>
        <authorList>
            <consortium name="US DOE Joint Genome Institute"/>
            <person name="Lucas S."/>
            <person name="Copeland A."/>
            <person name="Lapidus A."/>
            <person name="Glavina del Rio T."/>
            <person name="Dalin E."/>
            <person name="Tice H."/>
            <person name="Bruce D."/>
            <person name="Goodwin L."/>
            <person name="Pitluck S."/>
            <person name="Sims D."/>
            <person name="Brettin T."/>
            <person name="Detter J.C."/>
            <person name="Han C."/>
            <person name="Larimer F."/>
            <person name="Land M."/>
            <person name="Hauser L."/>
            <person name="Kyrpides N."/>
            <person name="Ivanova N."/>
            <person name="Marx C.J."/>
            <person name="Richardson P."/>
        </authorList>
    </citation>
    <scope>NUCLEOTIDE SEQUENCE [LARGE SCALE GENOMIC DNA]</scope>
    <source>
        <strain>LMG 21967 / CNCM I-2342 / ORS 2060</strain>
    </source>
</reference>
<accession>B8I9N8</accession>
<proteinExistence type="inferred from homology"/>